<keyword id="KW-0002">3D-structure</keyword>
<keyword id="KW-0012">Acyltransferase</keyword>
<keyword id="KW-0276">Fatty acid metabolism</keyword>
<keyword id="KW-0443">Lipid metabolism</keyword>
<keyword id="KW-1185">Reference proteome</keyword>
<keyword id="KW-0808">Transferase</keyword>
<dbReference type="EC" id="2.3.1.-" evidence="1 2"/>
<dbReference type="EMBL" id="AL123456">
    <property type="protein sequence ID" value="CCP44430.1"/>
    <property type="molecule type" value="Genomic_DNA"/>
</dbReference>
<dbReference type="PIR" id="C70985">
    <property type="entry name" value="C70985"/>
</dbReference>
<dbReference type="RefSeq" id="NP_216181.1">
    <property type="nucleotide sequence ID" value="NC_000962.3"/>
</dbReference>
<dbReference type="RefSeq" id="WP_003408248.1">
    <property type="nucleotide sequence ID" value="NZ_NVQJ01000010.1"/>
</dbReference>
<dbReference type="PDB" id="4JAO">
    <property type="method" value="X-ray"/>
    <property type="resolution" value="2.05 A"/>
    <property type="chains" value="A/B/C/D=1-353"/>
</dbReference>
<dbReference type="PDB" id="4JAP">
    <property type="method" value="X-ray"/>
    <property type="resolution" value="1.83 A"/>
    <property type="chains" value="A/B/C/D=1-353"/>
</dbReference>
<dbReference type="PDB" id="4JAQ">
    <property type="method" value="X-ray"/>
    <property type="resolution" value="1.73 A"/>
    <property type="chains" value="A/B/C/D=1-353"/>
</dbReference>
<dbReference type="PDB" id="4JAR">
    <property type="method" value="X-ray"/>
    <property type="resolution" value="1.98 A"/>
    <property type="chains" value="A/B/C/D=1-353"/>
</dbReference>
<dbReference type="PDB" id="4JAT">
    <property type="method" value="X-ray"/>
    <property type="resolution" value="2.42 A"/>
    <property type="chains" value="A/B/C/D=1-353"/>
</dbReference>
<dbReference type="PDB" id="4JD3">
    <property type="method" value="X-ray"/>
    <property type="resolution" value="2.25 A"/>
    <property type="chains" value="A/B/C/D=1-353"/>
</dbReference>
<dbReference type="PDBsum" id="4JAO"/>
<dbReference type="PDBsum" id="4JAP"/>
<dbReference type="PDBsum" id="4JAQ"/>
<dbReference type="PDBsum" id="4JAR"/>
<dbReference type="PDBsum" id="4JAT"/>
<dbReference type="PDBsum" id="4JD3"/>
<dbReference type="SMR" id="P9WPF3"/>
<dbReference type="FunCoup" id="P9WPF3">
    <property type="interactions" value="2"/>
</dbReference>
<dbReference type="STRING" id="83332.Rv1665"/>
<dbReference type="SwissLipids" id="SLP:000001036"/>
<dbReference type="PaxDb" id="83332-Rv1665"/>
<dbReference type="DNASU" id="885525"/>
<dbReference type="GeneID" id="885525"/>
<dbReference type="KEGG" id="mtu:Rv1665"/>
<dbReference type="KEGG" id="mtv:RVBD_1665"/>
<dbReference type="TubercuList" id="Rv1665"/>
<dbReference type="eggNOG" id="COG3424">
    <property type="taxonomic scope" value="Bacteria"/>
</dbReference>
<dbReference type="InParanoid" id="P9WPF3"/>
<dbReference type="OrthoDB" id="9786288at2"/>
<dbReference type="PhylomeDB" id="P9WPF3"/>
<dbReference type="UniPathway" id="UPA00094"/>
<dbReference type="EvolutionaryTrace" id="P9WPF3"/>
<dbReference type="Proteomes" id="UP000001584">
    <property type="component" value="Chromosome"/>
</dbReference>
<dbReference type="GO" id="GO:0034081">
    <property type="term" value="C:polyketide synthase complex"/>
    <property type="evidence" value="ECO:0000315"/>
    <property type="project" value="UniProtKB"/>
</dbReference>
<dbReference type="GO" id="GO:0016747">
    <property type="term" value="F:acyltransferase activity, transferring groups other than amino-acyl groups"/>
    <property type="evidence" value="ECO:0000318"/>
    <property type="project" value="GO_Central"/>
</dbReference>
<dbReference type="GO" id="GO:0009715">
    <property type="term" value="P:chalcone biosynthetic process"/>
    <property type="evidence" value="ECO:0000314"/>
    <property type="project" value="MTBBASE"/>
</dbReference>
<dbReference type="GO" id="GO:0071770">
    <property type="term" value="P:DIM/DIP cell wall layer assembly"/>
    <property type="evidence" value="ECO:0000315"/>
    <property type="project" value="MTBBASE"/>
</dbReference>
<dbReference type="GO" id="GO:0006633">
    <property type="term" value="P:fatty acid biosynthetic process"/>
    <property type="evidence" value="ECO:0007669"/>
    <property type="project" value="UniProtKB-UniPathway"/>
</dbReference>
<dbReference type="GO" id="GO:0008610">
    <property type="term" value="P:lipid biosynthetic process"/>
    <property type="evidence" value="ECO:0000315"/>
    <property type="project" value="MTBBASE"/>
</dbReference>
<dbReference type="GO" id="GO:0030639">
    <property type="term" value="P:polyketide biosynthetic process"/>
    <property type="evidence" value="ECO:0000318"/>
    <property type="project" value="GO_Central"/>
</dbReference>
<dbReference type="CDD" id="cd00831">
    <property type="entry name" value="CHS_like"/>
    <property type="match status" value="1"/>
</dbReference>
<dbReference type="FunFam" id="3.40.47.10:FF:000053">
    <property type="entry name" value="Alpha-pyrone synthesis polyketide synthase"/>
    <property type="match status" value="1"/>
</dbReference>
<dbReference type="FunFam" id="3.40.47.10:FF:000014">
    <property type="entry name" value="Chalcone synthase 1"/>
    <property type="match status" value="1"/>
</dbReference>
<dbReference type="Gene3D" id="3.40.47.10">
    <property type="match status" value="2"/>
</dbReference>
<dbReference type="InterPro" id="IPR012328">
    <property type="entry name" value="Chalcone/stilbene_synt_C"/>
</dbReference>
<dbReference type="InterPro" id="IPR001099">
    <property type="entry name" value="Chalcone/stilbene_synt_N"/>
</dbReference>
<dbReference type="InterPro" id="IPR011141">
    <property type="entry name" value="Polyketide_synthase_type-III"/>
</dbReference>
<dbReference type="InterPro" id="IPR016039">
    <property type="entry name" value="Thiolase-like"/>
</dbReference>
<dbReference type="PANTHER" id="PTHR11877:SF99">
    <property type="entry name" value="1,3,6,8-TETRAHYDROXYNAPHTHALENE SYNTHASE"/>
    <property type="match status" value="1"/>
</dbReference>
<dbReference type="PANTHER" id="PTHR11877">
    <property type="entry name" value="HYDROXYMETHYLGLUTARYL-COA SYNTHASE"/>
    <property type="match status" value="1"/>
</dbReference>
<dbReference type="Pfam" id="PF02797">
    <property type="entry name" value="Chal_sti_synt_C"/>
    <property type="match status" value="1"/>
</dbReference>
<dbReference type="Pfam" id="PF00195">
    <property type="entry name" value="Chal_sti_synt_N"/>
    <property type="match status" value="1"/>
</dbReference>
<dbReference type="PIRSF" id="PIRSF000451">
    <property type="entry name" value="PKS_III"/>
    <property type="match status" value="1"/>
</dbReference>
<dbReference type="SUPFAM" id="SSF53901">
    <property type="entry name" value="Thiolase-like"/>
    <property type="match status" value="1"/>
</dbReference>
<proteinExistence type="evidence at protein level"/>
<reference key="1">
    <citation type="journal article" date="1998" name="Nature">
        <title>Deciphering the biology of Mycobacterium tuberculosis from the complete genome sequence.</title>
        <authorList>
            <person name="Cole S.T."/>
            <person name="Brosch R."/>
            <person name="Parkhill J."/>
            <person name="Garnier T."/>
            <person name="Churcher C.M."/>
            <person name="Harris D.E."/>
            <person name="Gordon S.V."/>
            <person name="Eiglmeier K."/>
            <person name="Gas S."/>
            <person name="Barry C.E. III"/>
            <person name="Tekaia F."/>
            <person name="Badcock K."/>
            <person name="Basham D."/>
            <person name="Brown D."/>
            <person name="Chillingworth T."/>
            <person name="Connor R."/>
            <person name="Davies R.M."/>
            <person name="Devlin K."/>
            <person name="Feltwell T."/>
            <person name="Gentles S."/>
            <person name="Hamlin N."/>
            <person name="Holroyd S."/>
            <person name="Hornsby T."/>
            <person name="Jagels K."/>
            <person name="Krogh A."/>
            <person name="McLean J."/>
            <person name="Moule S."/>
            <person name="Murphy L.D."/>
            <person name="Oliver S."/>
            <person name="Osborne J."/>
            <person name="Quail M.A."/>
            <person name="Rajandream M.A."/>
            <person name="Rogers J."/>
            <person name="Rutter S."/>
            <person name="Seeger K."/>
            <person name="Skelton S."/>
            <person name="Squares S."/>
            <person name="Squares R."/>
            <person name="Sulston J.E."/>
            <person name="Taylor K."/>
            <person name="Whitehead S."/>
            <person name="Barrell B.G."/>
        </authorList>
    </citation>
    <scope>NUCLEOTIDE SEQUENCE [LARGE SCALE GENOMIC DNA]</scope>
    <source>
        <strain>ATCC 25618 / H37Rv</strain>
    </source>
</reference>
<reference key="2">
    <citation type="journal article" date="2003" name="J. Biol. Chem.">
        <title>A new family of type III polyketide synthases in Mycobacterium tuberculosis.</title>
        <authorList>
            <person name="Saxena P."/>
            <person name="Yadav G."/>
            <person name="Mohanty D."/>
            <person name="Gokhale R.S."/>
        </authorList>
    </citation>
    <scope>FUNCTION AS A POLYKETIDE SYNTHASE</scope>
    <scope>STARTER UNIT SPECIFICITY</scope>
    <scope>CATALYTIC ACTIVITY</scope>
    <source>
        <strain>ATCC 25618 / H37Rv</strain>
    </source>
</reference>
<reference key="3">
    <citation type="journal article" date="2011" name="Mol. Cell. Proteomics">
        <title>Proteogenomic analysis of Mycobacterium tuberculosis by high resolution mass spectrometry.</title>
        <authorList>
            <person name="Kelkar D.S."/>
            <person name="Kumar D."/>
            <person name="Kumar P."/>
            <person name="Balakrishnan L."/>
            <person name="Muthusamy B."/>
            <person name="Yadav A.K."/>
            <person name="Shrivastava P."/>
            <person name="Marimuthu A."/>
            <person name="Anand S."/>
            <person name="Sundaram H."/>
            <person name="Kingsbury R."/>
            <person name="Harsha H.C."/>
            <person name="Nair B."/>
            <person name="Prasad T.S."/>
            <person name="Chauhan D.S."/>
            <person name="Katoch K."/>
            <person name="Katoch V.M."/>
            <person name="Kumar P."/>
            <person name="Chaerkady R."/>
            <person name="Ramachandran S."/>
            <person name="Dash D."/>
            <person name="Pandey A."/>
        </authorList>
    </citation>
    <scope>IDENTIFICATION BY MASS SPECTROMETRY [LARGE SCALE ANALYSIS]</scope>
    <source>
        <strain>ATCC 25618 / H37Rv</strain>
    </source>
</reference>
<reference evidence="5 6 7 8 9 10" key="4">
    <citation type="journal article" date="2013" name="J. Biol. Chem.">
        <title>Crystal structure of Mycobacterium tuberculosis polyketide synthase 11 (PKS11) reveals intermediates in the synthesis of methyl-branched alkylpyrones.</title>
        <authorList>
            <person name="Gokulan K."/>
            <person name="O'Leary S.E."/>
            <person name="Russell W.K."/>
            <person name="Russell D.H."/>
            <person name="Lalgondar M."/>
            <person name="Begley T.P."/>
            <person name="Ioerger T.R."/>
            <person name="Sacchettini J.C."/>
        </authorList>
    </citation>
    <scope>X-RAY CRYSTALLOGRAPHY (1.73 ANGSTROMS) IN COMPLEXES WITH PALMITATE; COENZYME A AND POLYKETIDE INTERMEDIATES</scope>
    <scope>FUNCTION</scope>
    <scope>CATALYTIC ACTIVITY</scope>
    <scope>SUBUNIT</scope>
    <scope>ACTIVE SITE</scope>
    <scope>MUTAGENESIS OF CYS-138</scope>
</reference>
<sequence length="353" mass="37639">MSVIAGVFGALPPHRYSQSEITDSFVEFPGLKEHEEIIRRLHAAAKVNGRHLVLPLQQYPSLTDFGDANEIFIEKAVDLGVEALLGALDDANLRPSDIDMIATATVTGVAVPSLDARIAGRLGLRPDVRRMPLFGLGCVAGAAGVARLRDYLRGAPDDVAVLVSVELCSLTYPAVKPTVSSLVGTALFGDGAAAVVAVGDRRAEQVRAGGPDILDSRSSLYPDSLHIMGWDVGSHGLRLRLSPDLTNLIERYLANDVTTFLDAHRLTKDDIGAWVSHPGGPKVIDAVATSLALPPEALELTWRSLGEIGNLSSASILHILRDTIEKRPPSGSAGLMLAMGPGFCTELVLLRWR</sequence>
<name>PKS11_MYCTU</name>
<feature type="chain" id="PRO_0000407318" description="Methyl-branched alkylpyrone synthesis polyketide synthase-like Pks11">
    <location>
        <begin position="1"/>
        <end position="353"/>
    </location>
</feature>
<feature type="active site" description="Nucleophile" evidence="4">
    <location>
        <position position="138"/>
    </location>
</feature>
<feature type="binding site" evidence="2">
    <location>
        <position position="180"/>
    </location>
    <ligand>
        <name>substrate</name>
    </ligand>
</feature>
<feature type="binding site" evidence="2">
    <location>
        <position position="241"/>
    </location>
    <ligand>
        <name>substrate</name>
    </ligand>
</feature>
<feature type="binding site" evidence="2">
    <location>
        <begin position="277"/>
        <end position="282"/>
    </location>
    <ligand>
        <name>substrate</name>
    </ligand>
</feature>
<feature type="binding site" evidence="2">
    <location>
        <position position="312"/>
    </location>
    <ligand>
        <name>substrate</name>
    </ligand>
</feature>
<feature type="mutagenesis site" description="Can catalyze the hydrolysis of palmitoyl-CoA, but cannot produce cyclic polyketide products." evidence="2">
    <original>C</original>
    <variation>S</variation>
    <location>
        <position position="138"/>
    </location>
</feature>
<feature type="strand" evidence="12">
    <location>
        <begin position="3"/>
        <end position="10"/>
    </location>
</feature>
<feature type="strand" evidence="12">
    <location>
        <begin position="15"/>
        <end position="17"/>
    </location>
</feature>
<feature type="helix" evidence="12">
    <location>
        <begin position="18"/>
        <end position="25"/>
    </location>
</feature>
<feature type="turn" evidence="12">
    <location>
        <begin position="29"/>
        <end position="31"/>
    </location>
</feature>
<feature type="helix" evidence="12">
    <location>
        <begin position="32"/>
        <end position="34"/>
    </location>
</feature>
<feature type="helix" evidence="12">
    <location>
        <begin position="35"/>
        <end position="43"/>
    </location>
</feature>
<feature type="strand" evidence="12">
    <location>
        <begin position="49"/>
        <end position="51"/>
    </location>
</feature>
<feature type="helix" evidence="12">
    <location>
        <begin position="56"/>
        <end position="61"/>
    </location>
</feature>
<feature type="helix" evidence="12">
    <location>
        <begin position="65"/>
        <end position="91"/>
    </location>
</feature>
<feature type="helix" evidence="12">
    <location>
        <begin position="95"/>
        <end position="97"/>
    </location>
</feature>
<feature type="strand" evidence="12">
    <location>
        <begin position="99"/>
        <end position="107"/>
    </location>
</feature>
<feature type="helix" evidence="12">
    <location>
        <begin position="114"/>
        <end position="122"/>
    </location>
</feature>
<feature type="strand" evidence="12">
    <location>
        <begin position="129"/>
        <end position="135"/>
    </location>
</feature>
<feature type="helix" evidence="12">
    <location>
        <begin position="137"/>
        <end position="139"/>
    </location>
</feature>
<feature type="helix" evidence="12">
    <location>
        <begin position="140"/>
        <end position="154"/>
    </location>
</feature>
<feature type="strand" evidence="12">
    <location>
        <begin position="159"/>
        <end position="167"/>
    </location>
</feature>
<feature type="helix" evidence="12">
    <location>
        <begin position="168"/>
        <end position="174"/>
    </location>
</feature>
<feature type="helix" evidence="12">
    <location>
        <begin position="179"/>
        <end position="187"/>
    </location>
</feature>
<feature type="strand" evidence="12">
    <location>
        <begin position="190"/>
        <end position="198"/>
    </location>
</feature>
<feature type="helix" evidence="12">
    <location>
        <begin position="200"/>
        <end position="203"/>
    </location>
</feature>
<feature type="turn" evidence="11">
    <location>
        <begin position="204"/>
        <end position="207"/>
    </location>
</feature>
<feature type="strand" evidence="12">
    <location>
        <begin position="212"/>
        <end position="220"/>
    </location>
</feature>
<feature type="strand" evidence="12">
    <location>
        <begin position="227"/>
        <end position="233"/>
    </location>
</feature>
<feature type="strand" evidence="12">
    <location>
        <begin position="236"/>
        <end position="241"/>
    </location>
</feature>
<feature type="helix" evidence="12">
    <location>
        <begin position="245"/>
        <end position="262"/>
    </location>
</feature>
<feature type="turn" evidence="12">
    <location>
        <begin position="263"/>
        <end position="265"/>
    </location>
</feature>
<feature type="helix" evidence="12">
    <location>
        <begin position="268"/>
        <end position="270"/>
    </location>
</feature>
<feature type="strand" evidence="12">
    <location>
        <begin position="271"/>
        <end position="276"/>
    </location>
</feature>
<feature type="helix" evidence="12">
    <location>
        <begin position="281"/>
        <end position="290"/>
    </location>
</feature>
<feature type="turn" evidence="12">
    <location>
        <begin position="295"/>
        <end position="298"/>
    </location>
</feature>
<feature type="helix" evidence="12">
    <location>
        <begin position="299"/>
        <end position="308"/>
    </location>
</feature>
<feature type="helix" evidence="12">
    <location>
        <begin position="312"/>
        <end position="314"/>
    </location>
</feature>
<feature type="helix" evidence="12">
    <location>
        <begin position="315"/>
        <end position="325"/>
    </location>
</feature>
<feature type="strand" evidence="12">
    <location>
        <begin position="333"/>
        <end position="340"/>
    </location>
</feature>
<feature type="turn" evidence="12">
    <location>
        <begin position="341"/>
        <end position="343"/>
    </location>
</feature>
<feature type="strand" evidence="12">
    <location>
        <begin position="344"/>
        <end position="351"/>
    </location>
</feature>
<accession>P9WPF3</accession>
<accession>L0T8X6</accession>
<accession>O06587</accession>
<accession>Q7D871</accession>
<protein>
    <recommendedName>
        <fullName evidence="3">Methyl-branched alkylpyrone synthesis polyketide synthase-like Pks11</fullName>
        <ecNumber evidence="1 2">2.3.1.-</ecNumber>
    </recommendedName>
    <alternativeName>
        <fullName>Chalcone synthase-like protein</fullName>
        <shortName>CHS-like</shortName>
    </alternativeName>
    <alternativeName>
        <fullName evidence="3">Methyl-branched alkylpyrone synthesis polyketide synthase type III Pks11</fullName>
    </alternativeName>
</protein>
<gene>
    <name type="primary">pks11</name>
    <name type="ordered locus">Rv1665</name>
</gene>
<evidence type="ECO:0000269" key="1">
    <source>
    </source>
</evidence>
<evidence type="ECO:0000269" key="2">
    <source>
    </source>
</evidence>
<evidence type="ECO:0000305" key="3"/>
<evidence type="ECO:0000305" key="4">
    <source>
    </source>
</evidence>
<evidence type="ECO:0007744" key="5">
    <source>
        <dbReference type="PDB" id="4JAO"/>
    </source>
</evidence>
<evidence type="ECO:0007744" key="6">
    <source>
        <dbReference type="PDB" id="4JAP"/>
    </source>
</evidence>
<evidence type="ECO:0007744" key="7">
    <source>
        <dbReference type="PDB" id="4JAQ"/>
    </source>
</evidence>
<evidence type="ECO:0007744" key="8">
    <source>
        <dbReference type="PDB" id="4JAR"/>
    </source>
</evidence>
<evidence type="ECO:0007744" key="9">
    <source>
        <dbReference type="PDB" id="4JAT"/>
    </source>
</evidence>
<evidence type="ECO:0007744" key="10">
    <source>
        <dbReference type="PDB" id="4JD3"/>
    </source>
</evidence>
<evidence type="ECO:0007829" key="11">
    <source>
        <dbReference type="PDB" id="4JAP"/>
    </source>
</evidence>
<evidence type="ECO:0007829" key="12">
    <source>
        <dbReference type="PDB" id="4JAQ"/>
    </source>
</evidence>
<organism>
    <name type="scientific">Mycobacterium tuberculosis (strain ATCC 25618 / H37Rv)</name>
    <dbReference type="NCBI Taxonomy" id="83332"/>
    <lineage>
        <taxon>Bacteria</taxon>
        <taxon>Bacillati</taxon>
        <taxon>Actinomycetota</taxon>
        <taxon>Actinomycetes</taxon>
        <taxon>Mycobacteriales</taxon>
        <taxon>Mycobacteriaceae</taxon>
        <taxon>Mycobacterium</taxon>
        <taxon>Mycobacterium tuberculosis complex</taxon>
    </lineage>
</organism>
<comment type="function">
    <text evidence="1 2">Involved in the biosynthesis of methyl-branched alkylpyrones (PubMed:23615910). Pks11 catalyzes the extension of medium- and long-chain aliphatic acyl-CoA substrates by using malonyl-CoA and methylmalonyl-CoA as extender molecules to synthesize polyketide products (PubMed:12941968, PubMed:23615910). Palmitoyl-CoA or a similar long chain fatty acid derivative is the likely substrate in vivo (PubMed:23615910).</text>
</comment>
<comment type="catalytic activity">
    <reaction evidence="2">
        <text>methylmalonyl-CoA + hexadecanoyl-CoA + malonyl-CoA + 2 H(+) = 4-hydroxy-5-methyl-6-pentadecylpyran-2-one + 2 CO2 + 3 CoA</text>
        <dbReference type="Rhea" id="RHEA:44296"/>
        <dbReference type="ChEBI" id="CHEBI:15378"/>
        <dbReference type="ChEBI" id="CHEBI:16526"/>
        <dbReference type="ChEBI" id="CHEBI:57287"/>
        <dbReference type="ChEBI" id="CHEBI:57379"/>
        <dbReference type="ChEBI" id="CHEBI:57384"/>
        <dbReference type="ChEBI" id="CHEBI:59916"/>
        <dbReference type="ChEBI" id="CHEBI:84253"/>
    </reaction>
    <physiologicalReaction direction="left-to-right" evidence="2">
        <dbReference type="Rhea" id="RHEA:44297"/>
    </physiologicalReaction>
</comment>
<comment type="catalytic activity">
    <reaction evidence="2">
        <text>methylmalonyl-CoA + octadecanoyl-CoA + malonyl-CoA + 2 H(+) = 4-hydroxy-5-methyl-6-heptadecylpyran-2-one + 2 CO2 + 3 CoA</text>
        <dbReference type="Rhea" id="RHEA:44300"/>
        <dbReference type="ChEBI" id="CHEBI:15378"/>
        <dbReference type="ChEBI" id="CHEBI:16526"/>
        <dbReference type="ChEBI" id="CHEBI:57287"/>
        <dbReference type="ChEBI" id="CHEBI:57384"/>
        <dbReference type="ChEBI" id="CHEBI:57394"/>
        <dbReference type="ChEBI" id="CHEBI:59916"/>
        <dbReference type="ChEBI" id="CHEBI:84255"/>
    </reaction>
    <physiologicalReaction direction="left-to-right" evidence="2">
        <dbReference type="Rhea" id="RHEA:44301"/>
    </physiologicalReaction>
</comment>
<comment type="catalytic activity">
    <reaction evidence="1">
        <text>hexanoyl-CoA + 2 malonyl-CoA + 2 H(+) = 4-hydroxy-6-pentylpyran-2-one + 2 CO2 + 3 CoA</text>
        <dbReference type="Rhea" id="RHEA:43452"/>
        <dbReference type="ChEBI" id="CHEBI:15378"/>
        <dbReference type="ChEBI" id="CHEBI:16526"/>
        <dbReference type="ChEBI" id="CHEBI:57287"/>
        <dbReference type="ChEBI" id="CHEBI:57384"/>
        <dbReference type="ChEBI" id="CHEBI:62620"/>
        <dbReference type="ChEBI" id="CHEBI:66958"/>
    </reaction>
    <physiologicalReaction direction="left-to-right" evidence="1">
        <dbReference type="Rhea" id="RHEA:43453"/>
    </physiologicalReaction>
</comment>
<comment type="catalytic activity">
    <reaction evidence="1">
        <text>dodecanoyl-CoA + 2 malonyl-CoA + 2 H(+) = 4-hydroxy-6-undecylpyran-2-one + 2 CO2 + 3 CoA</text>
        <dbReference type="Rhea" id="RHEA:43460"/>
        <dbReference type="ChEBI" id="CHEBI:15378"/>
        <dbReference type="ChEBI" id="CHEBI:16526"/>
        <dbReference type="ChEBI" id="CHEBI:57287"/>
        <dbReference type="ChEBI" id="CHEBI:57375"/>
        <dbReference type="ChEBI" id="CHEBI:57384"/>
        <dbReference type="ChEBI" id="CHEBI:84149"/>
    </reaction>
    <physiologicalReaction direction="left-to-right" evidence="1">
        <dbReference type="Rhea" id="RHEA:43461"/>
    </physiologicalReaction>
</comment>
<comment type="catalytic activity">
    <reaction evidence="1">
        <text>dodecanoyl-CoA + 3 malonyl-CoA + 3 H(+) = 4-hydroxy-6-(2-oxotridecyl)pyran-2-one + 3 CO2 + 4 CoA</text>
        <dbReference type="Rhea" id="RHEA:43368"/>
        <dbReference type="ChEBI" id="CHEBI:15378"/>
        <dbReference type="ChEBI" id="CHEBI:16526"/>
        <dbReference type="ChEBI" id="CHEBI:57287"/>
        <dbReference type="ChEBI" id="CHEBI:57375"/>
        <dbReference type="ChEBI" id="CHEBI:57384"/>
        <dbReference type="ChEBI" id="CHEBI:84150"/>
    </reaction>
    <physiologicalReaction direction="left-to-right" evidence="1">
        <dbReference type="Rhea" id="RHEA:43369"/>
    </physiologicalReaction>
</comment>
<comment type="pathway">
    <text>Lipid metabolism; fatty acid biosynthesis.</text>
</comment>
<comment type="subunit">
    <text evidence="2">Homodimer.</text>
</comment>
<comment type="similarity">
    <text evidence="3">Belongs to the thiolase-like superfamily. Chalcone/stilbene synthases family.</text>
</comment>